<proteinExistence type="inferred from homology"/>
<sequence length="486" mass="54712">MKFVIKLFPEIMIKSESVRKRFVKILTGNIRNVLNKYDDGVAVVKHWDYIEVRSKNEENRAILIDVLGRIPGIHHFLEVDEKPFTDMHDIFEQTLADVGASLENKTFCVRVKRKGKHEFSSLDVERYVGGGLNQAIETAKVKLSNPDVTVRIDIENDHMMLIKARHEGIGGYPIGTQEDVLSLISGGFDSGVSSYMFIRRGSRVHYCFFNLGGAAHEIGVKQMAYHIWNRYSGSHKVRFVAINFENVVGEILEKIDNGQMGVVLKRMMVRAASKVAERFGIQAIVTGEALGQVSSQTLTNLRLIDEAASALVLRPLITHDKEAIIAMAKQIGTDDIAKSMPEFCGVISKNPTVKAIKEKIEKEELNFNFDVLESAVQNAQYLDIRQIAEQTEKDVVKVDTVSVLSANDVILDIRSPEEHDERPFELAGHEVKHLPFYKLSSQFGDLDQSKNYVLYCERGVMSKLQALYLKENGFANVRVFAHGNIN</sequence>
<evidence type="ECO:0000255" key="1">
    <source>
        <dbReference type="HAMAP-Rule" id="MF_00021"/>
    </source>
</evidence>
<comment type="function">
    <text evidence="1">Catalyzes the ATP-dependent transfer of a sulfur to tRNA to produce 4-thiouridine in position 8 of tRNAs, which functions as a near-UV photosensor. Also catalyzes the transfer of sulfur to the sulfur carrier protein ThiS, forming ThiS-thiocarboxylate. This is a step in the synthesis of thiazole, in the thiamine biosynthesis pathway. The sulfur is donated as persulfide by IscS.</text>
</comment>
<comment type="catalytic activity">
    <reaction evidence="1">
        <text>[ThiI sulfur-carrier protein]-S-sulfanyl-L-cysteine + a uridine in tRNA + 2 reduced [2Fe-2S]-[ferredoxin] + ATP + H(+) = [ThiI sulfur-carrier protein]-L-cysteine + a 4-thiouridine in tRNA + 2 oxidized [2Fe-2S]-[ferredoxin] + AMP + diphosphate</text>
        <dbReference type="Rhea" id="RHEA:24176"/>
        <dbReference type="Rhea" id="RHEA-COMP:10000"/>
        <dbReference type="Rhea" id="RHEA-COMP:10001"/>
        <dbReference type="Rhea" id="RHEA-COMP:13337"/>
        <dbReference type="Rhea" id="RHEA-COMP:13338"/>
        <dbReference type="Rhea" id="RHEA-COMP:13339"/>
        <dbReference type="Rhea" id="RHEA-COMP:13340"/>
        <dbReference type="ChEBI" id="CHEBI:15378"/>
        <dbReference type="ChEBI" id="CHEBI:29950"/>
        <dbReference type="ChEBI" id="CHEBI:30616"/>
        <dbReference type="ChEBI" id="CHEBI:33019"/>
        <dbReference type="ChEBI" id="CHEBI:33737"/>
        <dbReference type="ChEBI" id="CHEBI:33738"/>
        <dbReference type="ChEBI" id="CHEBI:61963"/>
        <dbReference type="ChEBI" id="CHEBI:65315"/>
        <dbReference type="ChEBI" id="CHEBI:136798"/>
        <dbReference type="ChEBI" id="CHEBI:456215"/>
        <dbReference type="EC" id="2.8.1.4"/>
    </reaction>
</comment>
<comment type="catalytic activity">
    <reaction evidence="1">
        <text>[ThiS sulfur-carrier protein]-C-terminal Gly-Gly-AMP + S-sulfanyl-L-cysteinyl-[cysteine desulfurase] + AH2 = [ThiS sulfur-carrier protein]-C-terminal-Gly-aminoethanethioate + L-cysteinyl-[cysteine desulfurase] + A + AMP + 2 H(+)</text>
        <dbReference type="Rhea" id="RHEA:43340"/>
        <dbReference type="Rhea" id="RHEA-COMP:12157"/>
        <dbReference type="Rhea" id="RHEA-COMP:12158"/>
        <dbReference type="Rhea" id="RHEA-COMP:12910"/>
        <dbReference type="Rhea" id="RHEA-COMP:19908"/>
        <dbReference type="ChEBI" id="CHEBI:13193"/>
        <dbReference type="ChEBI" id="CHEBI:15378"/>
        <dbReference type="ChEBI" id="CHEBI:17499"/>
        <dbReference type="ChEBI" id="CHEBI:29950"/>
        <dbReference type="ChEBI" id="CHEBI:61963"/>
        <dbReference type="ChEBI" id="CHEBI:90618"/>
        <dbReference type="ChEBI" id="CHEBI:232372"/>
        <dbReference type="ChEBI" id="CHEBI:456215"/>
    </reaction>
</comment>
<comment type="pathway">
    <text evidence="1">Cofactor biosynthesis; thiamine diphosphate biosynthesis.</text>
</comment>
<comment type="subcellular location">
    <subcellularLocation>
        <location evidence="1">Cytoplasm</location>
    </subcellularLocation>
</comment>
<comment type="similarity">
    <text evidence="1">Belongs to the ThiI family.</text>
</comment>
<reference key="1">
    <citation type="journal article" date="2004" name="Nat. Biotechnol.">
        <title>The genome sequence of the capnophilic rumen bacterium Mannheimia succiniciproducens.</title>
        <authorList>
            <person name="Hong S.H."/>
            <person name="Kim J.S."/>
            <person name="Lee S.Y."/>
            <person name="In Y.H."/>
            <person name="Choi S.S."/>
            <person name="Rih J.-K."/>
            <person name="Kim C.H."/>
            <person name="Jeong H."/>
            <person name="Hur C.G."/>
            <person name="Kim J.J."/>
        </authorList>
    </citation>
    <scope>NUCLEOTIDE SEQUENCE [LARGE SCALE GENOMIC DNA]</scope>
    <source>
        <strain>KCTC 0769BP / MBEL55E</strain>
    </source>
</reference>
<accession>Q65TP1</accession>
<gene>
    <name evidence="1" type="primary">thiI</name>
    <name type="ordered locus">MS1062</name>
</gene>
<name>THII_MANSM</name>
<feature type="chain" id="PRO_0000154848" description="tRNA sulfurtransferase">
    <location>
        <begin position="1"/>
        <end position="486"/>
    </location>
</feature>
<feature type="domain" description="THUMP" evidence="1">
    <location>
        <begin position="61"/>
        <end position="165"/>
    </location>
</feature>
<feature type="domain" description="Rhodanese" evidence="1">
    <location>
        <begin position="404"/>
        <end position="481"/>
    </location>
</feature>
<feature type="active site" description="Cysteine persulfide intermediate" evidence="1">
    <location>
        <position position="456"/>
    </location>
</feature>
<feature type="binding site" evidence="1">
    <location>
        <begin position="183"/>
        <end position="184"/>
    </location>
    <ligand>
        <name>ATP</name>
        <dbReference type="ChEBI" id="CHEBI:30616"/>
    </ligand>
</feature>
<feature type="binding site" evidence="1">
    <location>
        <position position="265"/>
    </location>
    <ligand>
        <name>ATP</name>
        <dbReference type="ChEBI" id="CHEBI:30616"/>
    </ligand>
</feature>
<feature type="binding site" evidence="1">
    <location>
        <position position="287"/>
    </location>
    <ligand>
        <name>ATP</name>
        <dbReference type="ChEBI" id="CHEBI:30616"/>
    </ligand>
</feature>
<feature type="binding site" evidence="1">
    <location>
        <position position="296"/>
    </location>
    <ligand>
        <name>ATP</name>
        <dbReference type="ChEBI" id="CHEBI:30616"/>
    </ligand>
</feature>
<feature type="disulfide bond" description="Redox-active" evidence="1">
    <location>
        <begin position="344"/>
        <end position="456"/>
    </location>
</feature>
<dbReference type="EC" id="2.8.1.4" evidence="1"/>
<dbReference type="EMBL" id="AE016827">
    <property type="protein sequence ID" value="AAU37669.1"/>
    <property type="molecule type" value="Genomic_DNA"/>
</dbReference>
<dbReference type="RefSeq" id="WP_011200237.1">
    <property type="nucleotide sequence ID" value="NC_006300.1"/>
</dbReference>
<dbReference type="SMR" id="Q65TP1"/>
<dbReference type="STRING" id="221988.MS1062"/>
<dbReference type="KEGG" id="msu:MS1062"/>
<dbReference type="eggNOG" id="COG0301">
    <property type="taxonomic scope" value="Bacteria"/>
</dbReference>
<dbReference type="eggNOG" id="COG0607">
    <property type="taxonomic scope" value="Bacteria"/>
</dbReference>
<dbReference type="HOGENOM" id="CLU_037952_4_1_6"/>
<dbReference type="OrthoDB" id="9773948at2"/>
<dbReference type="UniPathway" id="UPA00060"/>
<dbReference type="Proteomes" id="UP000000607">
    <property type="component" value="Chromosome"/>
</dbReference>
<dbReference type="GO" id="GO:0005829">
    <property type="term" value="C:cytosol"/>
    <property type="evidence" value="ECO:0007669"/>
    <property type="project" value="TreeGrafter"/>
</dbReference>
<dbReference type="GO" id="GO:0005524">
    <property type="term" value="F:ATP binding"/>
    <property type="evidence" value="ECO:0007669"/>
    <property type="project" value="UniProtKB-UniRule"/>
</dbReference>
<dbReference type="GO" id="GO:0004810">
    <property type="term" value="F:CCA tRNA nucleotidyltransferase activity"/>
    <property type="evidence" value="ECO:0007669"/>
    <property type="project" value="InterPro"/>
</dbReference>
<dbReference type="GO" id="GO:0000049">
    <property type="term" value="F:tRNA binding"/>
    <property type="evidence" value="ECO:0007669"/>
    <property type="project" value="UniProtKB-UniRule"/>
</dbReference>
<dbReference type="GO" id="GO:0140741">
    <property type="term" value="F:tRNA-uracil-4 sulfurtransferase activity"/>
    <property type="evidence" value="ECO:0007669"/>
    <property type="project" value="UniProtKB-EC"/>
</dbReference>
<dbReference type="GO" id="GO:0009228">
    <property type="term" value="P:thiamine biosynthetic process"/>
    <property type="evidence" value="ECO:0007669"/>
    <property type="project" value="UniProtKB-KW"/>
</dbReference>
<dbReference type="GO" id="GO:0009229">
    <property type="term" value="P:thiamine diphosphate biosynthetic process"/>
    <property type="evidence" value="ECO:0007669"/>
    <property type="project" value="UniProtKB-UniRule"/>
</dbReference>
<dbReference type="GO" id="GO:0052837">
    <property type="term" value="P:thiazole biosynthetic process"/>
    <property type="evidence" value="ECO:0007669"/>
    <property type="project" value="InterPro"/>
</dbReference>
<dbReference type="GO" id="GO:0002937">
    <property type="term" value="P:tRNA 4-thiouridine biosynthesis"/>
    <property type="evidence" value="ECO:0007669"/>
    <property type="project" value="TreeGrafter"/>
</dbReference>
<dbReference type="CDD" id="cd01712">
    <property type="entry name" value="PPase_ThiI"/>
    <property type="match status" value="1"/>
</dbReference>
<dbReference type="CDD" id="cd00158">
    <property type="entry name" value="RHOD"/>
    <property type="match status" value="1"/>
</dbReference>
<dbReference type="CDD" id="cd11716">
    <property type="entry name" value="THUMP_ThiI"/>
    <property type="match status" value="1"/>
</dbReference>
<dbReference type="FunFam" id="3.30.2130.30:FF:000002">
    <property type="entry name" value="tRNA sulfurtransferase"/>
    <property type="match status" value="1"/>
</dbReference>
<dbReference type="FunFam" id="3.40.50.620:FF:000029">
    <property type="entry name" value="tRNA sulfurtransferase"/>
    <property type="match status" value="1"/>
</dbReference>
<dbReference type="Gene3D" id="3.30.2130.30">
    <property type="match status" value="1"/>
</dbReference>
<dbReference type="Gene3D" id="3.40.50.620">
    <property type="entry name" value="HUPs"/>
    <property type="match status" value="1"/>
</dbReference>
<dbReference type="Gene3D" id="3.40.250.10">
    <property type="entry name" value="Rhodanese-like domain"/>
    <property type="match status" value="1"/>
</dbReference>
<dbReference type="HAMAP" id="MF_00021">
    <property type="entry name" value="ThiI"/>
    <property type="match status" value="1"/>
</dbReference>
<dbReference type="InterPro" id="IPR001763">
    <property type="entry name" value="Rhodanese-like_dom"/>
</dbReference>
<dbReference type="InterPro" id="IPR036873">
    <property type="entry name" value="Rhodanese-like_dom_sf"/>
</dbReference>
<dbReference type="InterPro" id="IPR014729">
    <property type="entry name" value="Rossmann-like_a/b/a_fold"/>
</dbReference>
<dbReference type="InterPro" id="IPR020536">
    <property type="entry name" value="ThiI_AANH"/>
</dbReference>
<dbReference type="InterPro" id="IPR054173">
    <property type="entry name" value="ThiI_fer"/>
</dbReference>
<dbReference type="InterPro" id="IPR049961">
    <property type="entry name" value="ThiI_N"/>
</dbReference>
<dbReference type="InterPro" id="IPR026340">
    <property type="entry name" value="THII_Thiazole_biosynth_dom"/>
</dbReference>
<dbReference type="InterPro" id="IPR004114">
    <property type="entry name" value="THUMP_dom"/>
</dbReference>
<dbReference type="InterPro" id="IPR049962">
    <property type="entry name" value="THUMP_ThiI"/>
</dbReference>
<dbReference type="InterPro" id="IPR003720">
    <property type="entry name" value="tRNA_STrfase"/>
</dbReference>
<dbReference type="InterPro" id="IPR050102">
    <property type="entry name" value="tRNA_sulfurtransferase_ThiI"/>
</dbReference>
<dbReference type="NCBIfam" id="TIGR04271">
    <property type="entry name" value="ThiI_C_thiazole"/>
    <property type="match status" value="1"/>
</dbReference>
<dbReference type="NCBIfam" id="TIGR00342">
    <property type="entry name" value="tRNA uracil 4-sulfurtransferase ThiI"/>
    <property type="match status" value="1"/>
</dbReference>
<dbReference type="PANTHER" id="PTHR43209">
    <property type="entry name" value="TRNA SULFURTRANSFERASE"/>
    <property type="match status" value="1"/>
</dbReference>
<dbReference type="PANTHER" id="PTHR43209:SF1">
    <property type="entry name" value="TRNA SULFURTRANSFERASE"/>
    <property type="match status" value="1"/>
</dbReference>
<dbReference type="Pfam" id="PF00581">
    <property type="entry name" value="Rhodanese"/>
    <property type="match status" value="1"/>
</dbReference>
<dbReference type="Pfam" id="PF02568">
    <property type="entry name" value="ThiI"/>
    <property type="match status" value="1"/>
</dbReference>
<dbReference type="Pfam" id="PF22025">
    <property type="entry name" value="ThiI_fer"/>
    <property type="match status" value="1"/>
</dbReference>
<dbReference type="Pfam" id="PF02926">
    <property type="entry name" value="THUMP"/>
    <property type="match status" value="1"/>
</dbReference>
<dbReference type="SMART" id="SM00981">
    <property type="entry name" value="THUMP"/>
    <property type="match status" value="1"/>
</dbReference>
<dbReference type="SUPFAM" id="SSF52402">
    <property type="entry name" value="Adenine nucleotide alpha hydrolases-like"/>
    <property type="match status" value="1"/>
</dbReference>
<dbReference type="SUPFAM" id="SSF52821">
    <property type="entry name" value="Rhodanese/Cell cycle control phosphatase"/>
    <property type="match status" value="1"/>
</dbReference>
<dbReference type="SUPFAM" id="SSF143437">
    <property type="entry name" value="THUMP domain-like"/>
    <property type="match status" value="1"/>
</dbReference>
<dbReference type="PROSITE" id="PS50206">
    <property type="entry name" value="RHODANESE_3"/>
    <property type="match status" value="1"/>
</dbReference>
<dbReference type="PROSITE" id="PS51165">
    <property type="entry name" value="THUMP"/>
    <property type="match status" value="1"/>
</dbReference>
<keyword id="KW-0067">ATP-binding</keyword>
<keyword id="KW-0963">Cytoplasm</keyword>
<keyword id="KW-1015">Disulfide bond</keyword>
<keyword id="KW-0547">Nucleotide-binding</keyword>
<keyword id="KW-0676">Redox-active center</keyword>
<keyword id="KW-0694">RNA-binding</keyword>
<keyword id="KW-0784">Thiamine biosynthesis</keyword>
<keyword id="KW-0808">Transferase</keyword>
<keyword id="KW-0820">tRNA-binding</keyword>
<organism>
    <name type="scientific">Mannheimia succiniciproducens (strain KCTC 0769BP / MBEL55E)</name>
    <dbReference type="NCBI Taxonomy" id="221988"/>
    <lineage>
        <taxon>Bacteria</taxon>
        <taxon>Pseudomonadati</taxon>
        <taxon>Pseudomonadota</taxon>
        <taxon>Gammaproteobacteria</taxon>
        <taxon>Pasteurellales</taxon>
        <taxon>Pasteurellaceae</taxon>
        <taxon>Basfia</taxon>
    </lineage>
</organism>
<protein>
    <recommendedName>
        <fullName evidence="1">tRNA sulfurtransferase</fullName>
        <ecNumber evidence="1">2.8.1.4</ecNumber>
    </recommendedName>
    <alternativeName>
        <fullName evidence="1">Sulfur carrier protein ThiS sulfurtransferase</fullName>
    </alternativeName>
    <alternativeName>
        <fullName evidence="1">Thiamine biosynthesis protein ThiI</fullName>
    </alternativeName>
    <alternativeName>
        <fullName evidence="1">tRNA 4-thiouridine synthase</fullName>
    </alternativeName>
</protein>